<sequence length="227" mass="26599">MEPAAEKREAEQEELQQQHDEPAVPSADDDEAEAEENERRNRELKAGFHPLRRRFVLWYTRRTPGARSQSYEDNIKKIVDFSTVESFWVCYCHLTRPVSLPSPTDLHLFKEGIRPLWEDPANRSGGKWIIRFKKTVSGRFWEDLVLVLVGDQLDYSDDVCGVVLSVRFNEDILSVWNRNASDHQAVMTLRDSIKRHLKLPHSYLMEYKPHDASLRDNSSYRNTWLRG</sequence>
<keyword id="KW-0396">Initiation factor</keyword>
<keyword id="KW-0648">Protein biosynthesis</keyword>
<keyword id="KW-1185">Reference proteome</keyword>
<keyword id="KW-0694">RNA-binding</keyword>
<keyword id="KW-0810">Translation regulation</keyword>
<organism>
    <name type="scientific">Oryza sativa subsp. japonica</name>
    <name type="common">Rice</name>
    <dbReference type="NCBI Taxonomy" id="39947"/>
    <lineage>
        <taxon>Eukaryota</taxon>
        <taxon>Viridiplantae</taxon>
        <taxon>Streptophyta</taxon>
        <taxon>Embryophyta</taxon>
        <taxon>Tracheophyta</taxon>
        <taxon>Spermatophyta</taxon>
        <taxon>Magnoliopsida</taxon>
        <taxon>Liliopsida</taxon>
        <taxon>Poales</taxon>
        <taxon>Poaceae</taxon>
        <taxon>BOP clade</taxon>
        <taxon>Oryzoideae</taxon>
        <taxon>Oryzeae</taxon>
        <taxon>Oryzinae</taxon>
        <taxon>Oryza</taxon>
        <taxon>Oryza sativa</taxon>
    </lineage>
</organism>
<reference key="1">
    <citation type="journal article" date="2005" name="Genome Res.">
        <title>Sequence, annotation, and analysis of synteny between rice chromosome 3 and diverged grass species.</title>
        <authorList>
            <consortium name="The rice chromosome 3 sequencing consortium"/>
            <person name="Buell C.R."/>
            <person name="Yuan Q."/>
            <person name="Ouyang S."/>
            <person name="Liu J."/>
            <person name="Zhu W."/>
            <person name="Wang A."/>
            <person name="Maiti R."/>
            <person name="Haas B."/>
            <person name="Wortman J."/>
            <person name="Pertea M."/>
            <person name="Jones K.M."/>
            <person name="Kim M."/>
            <person name="Overton L."/>
            <person name="Tsitrin T."/>
            <person name="Fadrosh D."/>
            <person name="Bera J."/>
            <person name="Weaver B."/>
            <person name="Jin S."/>
            <person name="Johri S."/>
            <person name="Reardon M."/>
            <person name="Webb K."/>
            <person name="Hill J."/>
            <person name="Moffat K."/>
            <person name="Tallon L."/>
            <person name="Van Aken S."/>
            <person name="Lewis M."/>
            <person name="Utterback T."/>
            <person name="Feldblyum T."/>
            <person name="Zismann V."/>
            <person name="Iobst S."/>
            <person name="Hsiao J."/>
            <person name="de Vazeille A.R."/>
            <person name="Salzberg S.L."/>
            <person name="White O."/>
            <person name="Fraser C.M."/>
            <person name="Yu Y."/>
            <person name="Kim H."/>
            <person name="Rambo T."/>
            <person name="Currie J."/>
            <person name="Collura K."/>
            <person name="Kernodle-Thompson S."/>
            <person name="Wei F."/>
            <person name="Kudrna K."/>
            <person name="Ammiraju J.S.S."/>
            <person name="Luo M."/>
            <person name="Goicoechea J.L."/>
            <person name="Wing R.A."/>
            <person name="Henry D."/>
            <person name="Oates R."/>
            <person name="Palmer M."/>
            <person name="Pries G."/>
            <person name="Saski C."/>
            <person name="Simmons J."/>
            <person name="Soderlund C."/>
            <person name="Nelson W."/>
            <person name="de la Bastide M."/>
            <person name="Spiegel L."/>
            <person name="Nascimento L."/>
            <person name="Huang E."/>
            <person name="Preston R."/>
            <person name="Zutavern T."/>
            <person name="Palmer L."/>
            <person name="O'Shaughnessy A."/>
            <person name="Dike S."/>
            <person name="McCombie W.R."/>
            <person name="Minx P."/>
            <person name="Cordum H."/>
            <person name="Wilson R."/>
            <person name="Jin W."/>
            <person name="Lee H.R."/>
            <person name="Jiang J."/>
            <person name="Jackson S."/>
        </authorList>
    </citation>
    <scope>NUCLEOTIDE SEQUENCE [LARGE SCALE GENOMIC DNA]</scope>
    <source>
        <strain>cv. Nipponbare</strain>
    </source>
</reference>
<reference key="2">
    <citation type="journal article" date="2005" name="Nature">
        <title>The map-based sequence of the rice genome.</title>
        <authorList>
            <consortium name="International rice genome sequencing project (IRGSP)"/>
        </authorList>
    </citation>
    <scope>NUCLEOTIDE SEQUENCE [LARGE SCALE GENOMIC DNA]</scope>
    <source>
        <strain>cv. Nipponbare</strain>
    </source>
</reference>
<reference key="3">
    <citation type="journal article" date="2008" name="Nucleic Acids Res.">
        <title>The rice annotation project database (RAP-DB): 2008 update.</title>
        <authorList>
            <consortium name="The rice annotation project (RAP)"/>
        </authorList>
    </citation>
    <scope>GENOME REANNOTATION</scope>
    <source>
        <strain>cv. Nipponbare</strain>
    </source>
</reference>
<reference key="4">
    <citation type="journal article" date="2013" name="Rice">
        <title>Improvement of the Oryza sativa Nipponbare reference genome using next generation sequence and optical map data.</title>
        <authorList>
            <person name="Kawahara Y."/>
            <person name="de la Bastide M."/>
            <person name="Hamilton J.P."/>
            <person name="Kanamori H."/>
            <person name="McCombie W.R."/>
            <person name="Ouyang S."/>
            <person name="Schwartz D.C."/>
            <person name="Tanaka T."/>
            <person name="Wu J."/>
            <person name="Zhou S."/>
            <person name="Childs K.L."/>
            <person name="Davidson R.M."/>
            <person name="Lin H."/>
            <person name="Quesada-Ocampo L."/>
            <person name="Vaillancourt B."/>
            <person name="Sakai H."/>
            <person name="Lee S.S."/>
            <person name="Kim J."/>
            <person name="Numa H."/>
            <person name="Itoh T."/>
            <person name="Buell C.R."/>
            <person name="Matsumoto T."/>
        </authorList>
    </citation>
    <scope>GENOME REANNOTATION</scope>
    <source>
        <strain>cv. Nipponbare</strain>
    </source>
</reference>
<reference key="5">
    <citation type="journal article" date="2005" name="PLoS Biol.">
        <title>The genomes of Oryza sativa: a history of duplications.</title>
        <authorList>
            <person name="Yu J."/>
            <person name="Wang J."/>
            <person name="Lin W."/>
            <person name="Li S."/>
            <person name="Li H."/>
            <person name="Zhou J."/>
            <person name="Ni P."/>
            <person name="Dong W."/>
            <person name="Hu S."/>
            <person name="Zeng C."/>
            <person name="Zhang J."/>
            <person name="Zhang Y."/>
            <person name="Li R."/>
            <person name="Xu Z."/>
            <person name="Li S."/>
            <person name="Li X."/>
            <person name="Zheng H."/>
            <person name="Cong L."/>
            <person name="Lin L."/>
            <person name="Yin J."/>
            <person name="Geng J."/>
            <person name="Li G."/>
            <person name="Shi J."/>
            <person name="Liu J."/>
            <person name="Lv H."/>
            <person name="Li J."/>
            <person name="Wang J."/>
            <person name="Deng Y."/>
            <person name="Ran L."/>
            <person name="Shi X."/>
            <person name="Wang X."/>
            <person name="Wu Q."/>
            <person name="Li C."/>
            <person name="Ren X."/>
            <person name="Wang J."/>
            <person name="Wang X."/>
            <person name="Li D."/>
            <person name="Liu D."/>
            <person name="Zhang X."/>
            <person name="Ji Z."/>
            <person name="Zhao W."/>
            <person name="Sun Y."/>
            <person name="Zhang Z."/>
            <person name="Bao J."/>
            <person name="Han Y."/>
            <person name="Dong L."/>
            <person name="Ji J."/>
            <person name="Chen P."/>
            <person name="Wu S."/>
            <person name="Liu J."/>
            <person name="Xiao Y."/>
            <person name="Bu D."/>
            <person name="Tan J."/>
            <person name="Yang L."/>
            <person name="Ye C."/>
            <person name="Zhang J."/>
            <person name="Xu J."/>
            <person name="Zhou Y."/>
            <person name="Yu Y."/>
            <person name="Zhang B."/>
            <person name="Zhuang S."/>
            <person name="Wei H."/>
            <person name="Liu B."/>
            <person name="Lei M."/>
            <person name="Yu H."/>
            <person name="Li Y."/>
            <person name="Xu H."/>
            <person name="Wei S."/>
            <person name="He X."/>
            <person name="Fang L."/>
            <person name="Zhang Z."/>
            <person name="Zhang Y."/>
            <person name="Huang X."/>
            <person name="Su Z."/>
            <person name="Tong W."/>
            <person name="Li J."/>
            <person name="Tong Z."/>
            <person name="Li S."/>
            <person name="Ye J."/>
            <person name="Wang L."/>
            <person name="Fang L."/>
            <person name="Lei T."/>
            <person name="Chen C.-S."/>
            <person name="Chen H.-C."/>
            <person name="Xu Z."/>
            <person name="Li H."/>
            <person name="Huang H."/>
            <person name="Zhang F."/>
            <person name="Xu H."/>
            <person name="Li N."/>
            <person name="Zhao C."/>
            <person name="Li S."/>
            <person name="Dong L."/>
            <person name="Huang Y."/>
            <person name="Li L."/>
            <person name="Xi Y."/>
            <person name="Qi Q."/>
            <person name="Li W."/>
            <person name="Zhang B."/>
            <person name="Hu W."/>
            <person name="Zhang Y."/>
            <person name="Tian X."/>
            <person name="Jiao Y."/>
            <person name="Liang X."/>
            <person name="Jin J."/>
            <person name="Gao L."/>
            <person name="Zheng W."/>
            <person name="Hao B."/>
            <person name="Liu S.-M."/>
            <person name="Wang W."/>
            <person name="Yuan L."/>
            <person name="Cao M."/>
            <person name="McDermott J."/>
            <person name="Samudrala R."/>
            <person name="Wang J."/>
            <person name="Wong G.K.-S."/>
            <person name="Yang H."/>
        </authorList>
    </citation>
    <scope>NUCLEOTIDE SEQUENCE [LARGE SCALE GENOMIC DNA]</scope>
    <source>
        <strain>cv. Nipponbare</strain>
    </source>
</reference>
<reference key="6">
    <citation type="journal article" date="2003" name="Science">
        <title>Collection, mapping, and annotation of over 28,000 cDNA clones from japonica rice.</title>
        <authorList>
            <consortium name="The rice full-length cDNA consortium"/>
        </authorList>
    </citation>
    <scope>NUCLEOTIDE SEQUENCE [LARGE SCALE MRNA]</scope>
    <source>
        <strain>cv. Nipponbare</strain>
    </source>
</reference>
<reference key="7">
    <citation type="journal article" date="2007" name="Theor. Appl. Genet.">
        <title>Evaluation of genes from eIF4E and eIF4G multigenic families as potential candidates for partial resistance QTLs to Rice yellow mottle virus in rice.</title>
        <authorList>
            <person name="Boisnard A."/>
            <person name="Albar L."/>
            <person name="Thiemele D."/>
            <person name="Rondeau M."/>
            <person name="Ghesquiere A."/>
        </authorList>
    </citation>
    <scope>GENE FAMILY</scope>
</reference>
<accession>Q10NQ9</accession>
<accession>A0A0N7KGZ2</accession>
<dbReference type="EMBL" id="DP000009">
    <property type="protein sequence ID" value="ABF95097.1"/>
    <property type="molecule type" value="Genomic_DNA"/>
</dbReference>
<dbReference type="EMBL" id="AP008209">
    <property type="protein sequence ID" value="BAF11542.1"/>
    <property type="molecule type" value="Genomic_DNA"/>
</dbReference>
<dbReference type="EMBL" id="AP014959">
    <property type="protein sequence ID" value="BAS83369.1"/>
    <property type="molecule type" value="Genomic_DNA"/>
</dbReference>
<dbReference type="EMBL" id="CM000140">
    <property type="protein sequence ID" value="EAZ26341.1"/>
    <property type="molecule type" value="Genomic_DNA"/>
</dbReference>
<dbReference type="EMBL" id="AK059989">
    <property type="protein sequence ID" value="BAG87256.1"/>
    <property type="molecule type" value="mRNA"/>
</dbReference>
<dbReference type="RefSeq" id="XP_015631510.1">
    <property type="nucleotide sequence ID" value="XM_015776024.1"/>
</dbReference>
<dbReference type="SMR" id="Q10NQ9"/>
<dbReference type="FunCoup" id="Q10NQ9">
    <property type="interactions" value="2725"/>
</dbReference>
<dbReference type="STRING" id="39947.Q10NQ9"/>
<dbReference type="PaxDb" id="39947-Q10NQ9"/>
<dbReference type="EnsemblPlants" id="Os03t0262400-01">
    <property type="protein sequence ID" value="Os03t0262400-01"/>
    <property type="gene ID" value="Os03g0262400"/>
</dbReference>
<dbReference type="Gramene" id="Os03t0262400-01">
    <property type="protein sequence ID" value="Os03t0262400-01"/>
    <property type="gene ID" value="Os03g0262400"/>
</dbReference>
<dbReference type="KEGG" id="dosa:Os03g0262400"/>
<dbReference type="eggNOG" id="KOG1669">
    <property type="taxonomic scope" value="Eukaryota"/>
</dbReference>
<dbReference type="HOGENOM" id="CLU_043552_3_1_1"/>
<dbReference type="InParanoid" id="Q10NQ9"/>
<dbReference type="OMA" id="VWNKTAN"/>
<dbReference type="OrthoDB" id="590761at2759"/>
<dbReference type="Proteomes" id="UP000000763">
    <property type="component" value="Chromosome 3"/>
</dbReference>
<dbReference type="Proteomes" id="UP000007752">
    <property type="component" value="Chromosome 3"/>
</dbReference>
<dbReference type="Proteomes" id="UP000059680">
    <property type="component" value="Chromosome 3"/>
</dbReference>
<dbReference type="GO" id="GO:0016281">
    <property type="term" value="C:eukaryotic translation initiation factor 4F complex"/>
    <property type="evidence" value="ECO:0000318"/>
    <property type="project" value="GO_Central"/>
</dbReference>
<dbReference type="GO" id="GO:0000340">
    <property type="term" value="F:RNA 7-methylguanosine cap binding"/>
    <property type="evidence" value="ECO:0000318"/>
    <property type="project" value="GO_Central"/>
</dbReference>
<dbReference type="GO" id="GO:0003743">
    <property type="term" value="F:translation initiation factor activity"/>
    <property type="evidence" value="ECO:0000318"/>
    <property type="project" value="GO_Central"/>
</dbReference>
<dbReference type="GO" id="GO:0006417">
    <property type="term" value="P:regulation of translation"/>
    <property type="evidence" value="ECO:0007669"/>
    <property type="project" value="UniProtKB-KW"/>
</dbReference>
<dbReference type="GO" id="GO:0006413">
    <property type="term" value="P:translational initiation"/>
    <property type="evidence" value="ECO:0000318"/>
    <property type="project" value="GO_Central"/>
</dbReference>
<dbReference type="FunFam" id="3.30.760.10:FF:000008">
    <property type="entry name" value="Eukaryotic translation initiation factor NCBP"/>
    <property type="match status" value="1"/>
</dbReference>
<dbReference type="Gene3D" id="3.30.760.10">
    <property type="entry name" value="RNA Cap, Translation Initiation Factor Eif4e"/>
    <property type="match status" value="1"/>
</dbReference>
<dbReference type="InterPro" id="IPR023398">
    <property type="entry name" value="TIF_eIF4e-like"/>
</dbReference>
<dbReference type="InterPro" id="IPR001040">
    <property type="entry name" value="TIF_eIF_4E"/>
</dbReference>
<dbReference type="InterPro" id="IPR019770">
    <property type="entry name" value="TIF_eIF_4E_CS"/>
</dbReference>
<dbReference type="PANTHER" id="PTHR11960:SF18">
    <property type="entry name" value="EUKARYOTIC TRANSLATION INITIATION FACTOR 4E HOMOLOGOUS PROTEIN, ISOFORM B"/>
    <property type="match status" value="1"/>
</dbReference>
<dbReference type="PANTHER" id="PTHR11960">
    <property type="entry name" value="EUKARYOTIC TRANSLATION INITIATION FACTOR 4E RELATED"/>
    <property type="match status" value="1"/>
</dbReference>
<dbReference type="Pfam" id="PF01652">
    <property type="entry name" value="IF4E"/>
    <property type="match status" value="1"/>
</dbReference>
<dbReference type="SUPFAM" id="SSF55418">
    <property type="entry name" value="eIF4e-like"/>
    <property type="match status" value="1"/>
</dbReference>
<dbReference type="PROSITE" id="PS00813">
    <property type="entry name" value="IF4E"/>
    <property type="match status" value="1"/>
</dbReference>
<proteinExistence type="evidence at transcript level"/>
<evidence type="ECO:0000256" key="1">
    <source>
        <dbReference type="SAM" id="MobiDB-lite"/>
    </source>
</evidence>
<evidence type="ECO:0000305" key="2"/>
<comment type="function">
    <text>Recognizes and binds the 7-methylguanosine-containing mRNA cap during an early step in the initiation of protein synthesis and facilitates ribosome binding by inducing the unwinding of the mRNAs secondary structures.</text>
</comment>
<comment type="subunit">
    <text>EIF4F is a multi-subunit complex, the composition of which varies with external and internal environmental conditions. It is composed of at least EIF4A, EIF4E and EIF4G. EIF4E is also known to interact with other partners. In higher plants two isoforms of EIF4F have been identified, named isoform EIF4F and isoform EIF(iso)4F. Isoform EIF4F has subunits p220 and p26, whereas isoform EIF(iso)4F has subunits p82 and p28.</text>
</comment>
<comment type="similarity">
    <text evidence="2">Belongs to the eukaryotic initiation factor 4E family.</text>
</comment>
<name>IF4E3_ORYSJ</name>
<feature type="chain" id="PRO_0000420540" description="Eukaryotic translation initiation factor NCBP">
    <location>
        <begin position="1"/>
        <end position="227"/>
    </location>
</feature>
<feature type="region of interest" description="Disordered" evidence="1">
    <location>
        <begin position="1"/>
        <end position="43"/>
    </location>
</feature>
<feature type="compositionally biased region" description="Basic and acidic residues" evidence="1">
    <location>
        <begin position="1"/>
        <end position="22"/>
    </location>
</feature>
<feature type="compositionally biased region" description="Acidic residues" evidence="1">
    <location>
        <begin position="27"/>
        <end position="36"/>
    </location>
</feature>
<protein>
    <recommendedName>
        <fullName>Eukaryotic translation initiation factor NCBP</fullName>
    </recommendedName>
    <alternativeName>
        <fullName>Novel cap-binding protein</fullName>
        <shortName>nCBP</shortName>
    </alternativeName>
    <alternativeName>
        <fullName>mRNA cap-binding protein</fullName>
    </alternativeName>
</protein>
<gene>
    <name type="primary">NCBP</name>
    <name type="ordered locus">Os03g0262400</name>
    <name type="ordered locus">LOC_Os03g15590</name>
    <name type="ORF">OsJ_10222</name>
</gene>